<evidence type="ECO:0000255" key="1">
    <source>
        <dbReference type="HAMAP-Rule" id="MF_00052"/>
    </source>
</evidence>
<evidence type="ECO:0000255" key="2">
    <source>
        <dbReference type="PROSITE-ProRule" id="PRU01319"/>
    </source>
</evidence>
<name>RNH2_BRUC2</name>
<keyword id="KW-0963">Cytoplasm</keyword>
<keyword id="KW-0255">Endonuclease</keyword>
<keyword id="KW-0378">Hydrolase</keyword>
<keyword id="KW-0464">Manganese</keyword>
<keyword id="KW-0479">Metal-binding</keyword>
<keyword id="KW-0540">Nuclease</keyword>
<keyword id="KW-1185">Reference proteome</keyword>
<accession>A9M8G2</accession>
<sequence>MKRSASDSPLLFDLPLAPDFSQEQQLMKRGLKHIAGIDEAGRGPLAGPVVAAAVVLDQNDLPEGLDDSKRLTAARREALYEIILTKAITVSVASLSARSIDASDIRKAALEAMRRAVIGLTLKPCHALVDGRDVPPGLPCPGSALVKGDQRSVSIAAASIVAKVTRDRMMIRAGAAHPPYGLEIHAGYATQKHRAAIESEGPVPGLHRYTFAPIKGRFDC</sequence>
<dbReference type="EC" id="3.1.26.4" evidence="1"/>
<dbReference type="EMBL" id="CP000872">
    <property type="protein sequence ID" value="ABX61478.1"/>
    <property type="molecule type" value="Genomic_DNA"/>
</dbReference>
<dbReference type="RefSeq" id="WP_004683016.1">
    <property type="nucleotide sequence ID" value="NC_010103.1"/>
</dbReference>
<dbReference type="SMR" id="A9M8G2"/>
<dbReference type="KEGG" id="bcs:BCAN_A0391"/>
<dbReference type="HOGENOM" id="CLU_036532_3_2_5"/>
<dbReference type="PhylomeDB" id="A9M8G2"/>
<dbReference type="Proteomes" id="UP000001385">
    <property type="component" value="Chromosome I"/>
</dbReference>
<dbReference type="GO" id="GO:0005737">
    <property type="term" value="C:cytoplasm"/>
    <property type="evidence" value="ECO:0007669"/>
    <property type="project" value="UniProtKB-SubCell"/>
</dbReference>
<dbReference type="GO" id="GO:0032299">
    <property type="term" value="C:ribonuclease H2 complex"/>
    <property type="evidence" value="ECO:0007669"/>
    <property type="project" value="TreeGrafter"/>
</dbReference>
<dbReference type="GO" id="GO:0030145">
    <property type="term" value="F:manganese ion binding"/>
    <property type="evidence" value="ECO:0007669"/>
    <property type="project" value="UniProtKB-UniRule"/>
</dbReference>
<dbReference type="GO" id="GO:0003723">
    <property type="term" value="F:RNA binding"/>
    <property type="evidence" value="ECO:0007669"/>
    <property type="project" value="InterPro"/>
</dbReference>
<dbReference type="GO" id="GO:0004523">
    <property type="term" value="F:RNA-DNA hybrid ribonuclease activity"/>
    <property type="evidence" value="ECO:0007669"/>
    <property type="project" value="UniProtKB-UniRule"/>
</dbReference>
<dbReference type="GO" id="GO:0043137">
    <property type="term" value="P:DNA replication, removal of RNA primer"/>
    <property type="evidence" value="ECO:0007669"/>
    <property type="project" value="TreeGrafter"/>
</dbReference>
<dbReference type="GO" id="GO:0006298">
    <property type="term" value="P:mismatch repair"/>
    <property type="evidence" value="ECO:0007669"/>
    <property type="project" value="TreeGrafter"/>
</dbReference>
<dbReference type="CDD" id="cd07182">
    <property type="entry name" value="RNase_HII_bacteria_HII_like"/>
    <property type="match status" value="1"/>
</dbReference>
<dbReference type="Gene3D" id="3.30.420.10">
    <property type="entry name" value="Ribonuclease H-like superfamily/Ribonuclease H"/>
    <property type="match status" value="1"/>
</dbReference>
<dbReference type="HAMAP" id="MF_00052_B">
    <property type="entry name" value="RNase_HII_B"/>
    <property type="match status" value="1"/>
</dbReference>
<dbReference type="InterPro" id="IPR022898">
    <property type="entry name" value="RNase_HII"/>
</dbReference>
<dbReference type="InterPro" id="IPR001352">
    <property type="entry name" value="RNase_HII/HIII"/>
</dbReference>
<dbReference type="InterPro" id="IPR024567">
    <property type="entry name" value="RNase_HII/HIII_dom"/>
</dbReference>
<dbReference type="InterPro" id="IPR012337">
    <property type="entry name" value="RNaseH-like_sf"/>
</dbReference>
<dbReference type="InterPro" id="IPR036397">
    <property type="entry name" value="RNaseH_sf"/>
</dbReference>
<dbReference type="NCBIfam" id="NF000595">
    <property type="entry name" value="PRK00015.1-3"/>
    <property type="match status" value="1"/>
</dbReference>
<dbReference type="PANTHER" id="PTHR10954">
    <property type="entry name" value="RIBONUCLEASE H2 SUBUNIT A"/>
    <property type="match status" value="1"/>
</dbReference>
<dbReference type="PANTHER" id="PTHR10954:SF18">
    <property type="entry name" value="RIBONUCLEASE HII"/>
    <property type="match status" value="1"/>
</dbReference>
<dbReference type="Pfam" id="PF01351">
    <property type="entry name" value="RNase_HII"/>
    <property type="match status" value="1"/>
</dbReference>
<dbReference type="SUPFAM" id="SSF53098">
    <property type="entry name" value="Ribonuclease H-like"/>
    <property type="match status" value="1"/>
</dbReference>
<dbReference type="PROSITE" id="PS51975">
    <property type="entry name" value="RNASE_H_2"/>
    <property type="match status" value="1"/>
</dbReference>
<protein>
    <recommendedName>
        <fullName evidence="1">Ribonuclease HII</fullName>
        <shortName evidence="1">RNase HII</shortName>
        <ecNumber evidence="1">3.1.26.4</ecNumber>
    </recommendedName>
</protein>
<comment type="function">
    <text evidence="1">Endonuclease that specifically degrades the RNA of RNA-DNA hybrids.</text>
</comment>
<comment type="catalytic activity">
    <reaction evidence="1">
        <text>Endonucleolytic cleavage to 5'-phosphomonoester.</text>
        <dbReference type="EC" id="3.1.26.4"/>
    </reaction>
</comment>
<comment type="cofactor">
    <cofactor evidence="1">
        <name>Mn(2+)</name>
        <dbReference type="ChEBI" id="CHEBI:29035"/>
    </cofactor>
    <cofactor evidence="1">
        <name>Mg(2+)</name>
        <dbReference type="ChEBI" id="CHEBI:18420"/>
    </cofactor>
    <text evidence="1">Manganese or magnesium. Binds 1 divalent metal ion per monomer in the absence of substrate. May bind a second metal ion after substrate binding.</text>
</comment>
<comment type="subcellular location">
    <subcellularLocation>
        <location evidence="1">Cytoplasm</location>
    </subcellularLocation>
</comment>
<comment type="similarity">
    <text evidence="1">Belongs to the RNase HII family.</text>
</comment>
<proteinExistence type="inferred from homology"/>
<feature type="chain" id="PRO_1000074917" description="Ribonuclease HII">
    <location>
        <begin position="1"/>
        <end position="220"/>
    </location>
</feature>
<feature type="domain" description="RNase H type-2" evidence="2">
    <location>
        <begin position="32"/>
        <end position="220"/>
    </location>
</feature>
<feature type="binding site" evidence="1">
    <location>
        <position position="38"/>
    </location>
    <ligand>
        <name>a divalent metal cation</name>
        <dbReference type="ChEBI" id="CHEBI:60240"/>
    </ligand>
</feature>
<feature type="binding site" evidence="1">
    <location>
        <position position="39"/>
    </location>
    <ligand>
        <name>a divalent metal cation</name>
        <dbReference type="ChEBI" id="CHEBI:60240"/>
    </ligand>
</feature>
<feature type="binding site" evidence="1">
    <location>
        <position position="130"/>
    </location>
    <ligand>
        <name>a divalent metal cation</name>
        <dbReference type="ChEBI" id="CHEBI:60240"/>
    </ligand>
</feature>
<gene>
    <name evidence="1" type="primary">rnhB</name>
    <name type="ordered locus">BCAN_A0391</name>
</gene>
<reference key="1">
    <citation type="submission" date="2007-10" db="EMBL/GenBank/DDBJ databases">
        <title>Brucella canis ATCC 23365 whole genome shotgun sequencing project.</title>
        <authorList>
            <person name="Setubal J.C."/>
            <person name="Bowns C."/>
            <person name="Boyle S."/>
            <person name="Crasta O.R."/>
            <person name="Czar M.J."/>
            <person name="Dharmanolla C."/>
            <person name="Gillespie J.J."/>
            <person name="Kenyon R.W."/>
            <person name="Lu J."/>
            <person name="Mane S."/>
            <person name="Mohapatra S."/>
            <person name="Nagrani S."/>
            <person name="Purkayastha A."/>
            <person name="Rajasimha H.K."/>
            <person name="Shallom J.M."/>
            <person name="Shallom S."/>
            <person name="Shukla M."/>
            <person name="Snyder E.E."/>
            <person name="Sobral B.W."/>
            <person name="Wattam A.R."/>
            <person name="Will R."/>
            <person name="Williams K."/>
            <person name="Yoo H."/>
            <person name="Bruce D."/>
            <person name="Detter C."/>
            <person name="Munk C."/>
            <person name="Brettin T.S."/>
        </authorList>
    </citation>
    <scope>NUCLEOTIDE SEQUENCE [LARGE SCALE GENOMIC DNA]</scope>
    <source>
        <strain>ATCC 23365 / NCTC 10854 / RM-666</strain>
    </source>
</reference>
<organism>
    <name type="scientific">Brucella canis (strain ATCC 23365 / NCTC 10854 / RM-666)</name>
    <dbReference type="NCBI Taxonomy" id="483179"/>
    <lineage>
        <taxon>Bacteria</taxon>
        <taxon>Pseudomonadati</taxon>
        <taxon>Pseudomonadota</taxon>
        <taxon>Alphaproteobacteria</taxon>
        <taxon>Hyphomicrobiales</taxon>
        <taxon>Brucellaceae</taxon>
        <taxon>Brucella/Ochrobactrum group</taxon>
        <taxon>Brucella</taxon>
    </lineage>
</organism>